<evidence type="ECO:0000255" key="1">
    <source>
        <dbReference type="HAMAP-Rule" id="MF_00309"/>
    </source>
</evidence>
<gene>
    <name evidence="1" type="primary">atpA</name>
    <name type="ordered locus">CLK_2011</name>
</gene>
<organism>
    <name type="scientific">Clostridium botulinum (strain Loch Maree / Type A3)</name>
    <dbReference type="NCBI Taxonomy" id="498214"/>
    <lineage>
        <taxon>Bacteria</taxon>
        <taxon>Bacillati</taxon>
        <taxon>Bacillota</taxon>
        <taxon>Clostridia</taxon>
        <taxon>Eubacteriales</taxon>
        <taxon>Clostridiaceae</taxon>
        <taxon>Clostridium</taxon>
    </lineage>
</organism>
<comment type="function">
    <text evidence="1">Produces ATP from ADP in the presence of a proton gradient across the membrane. The V-type alpha chain is a catalytic subunit.</text>
</comment>
<comment type="catalytic activity">
    <reaction evidence="1">
        <text>ATP + H2O + 4 H(+)(in) = ADP + phosphate + 5 H(+)(out)</text>
        <dbReference type="Rhea" id="RHEA:57720"/>
        <dbReference type="ChEBI" id="CHEBI:15377"/>
        <dbReference type="ChEBI" id="CHEBI:15378"/>
        <dbReference type="ChEBI" id="CHEBI:30616"/>
        <dbReference type="ChEBI" id="CHEBI:43474"/>
        <dbReference type="ChEBI" id="CHEBI:456216"/>
        <dbReference type="EC" id="7.1.2.2"/>
    </reaction>
</comment>
<comment type="similarity">
    <text evidence="1">Belongs to the ATPase alpha/beta chains family.</text>
</comment>
<name>VATA_CLOBM</name>
<proteinExistence type="inferred from homology"/>
<protein>
    <recommendedName>
        <fullName evidence="1">V-type ATP synthase alpha chain</fullName>
        <ecNumber evidence="1">7.1.2.2</ecNumber>
    </recommendedName>
    <alternativeName>
        <fullName evidence="1">V-ATPase subunit A</fullName>
    </alternativeName>
</protein>
<sequence length="592" mass="65766">MNLKTGRVLKISGPLVVAEGMEEANIYDVVKVGEKRLIGEIIEMREDRASIQVYEETAGLAPGDPVITTGEPLSVELGPGLIEAMFDGIQRPLNAIKAKAGDFITRGVEVHSLDRDRKWHFTPVKKVGDTVEAGDVIGIVQETSIVEHKIMVPYGIKGTIETIEEGDFTVVDTVAKVKDKDKVSDLIMMQKWPVRRGRPYGRKLNPVEPMITGQRVIDTFFPVTKGGTACVPGPFGSGKTVVQHQLAKWADAQIVVYIGCGERGNEMTDVLNEFPELKDPKTGEPLMKRTVLIANTSNMPVAAREASIYTGITIGEYFRDMGYSVALMADSTSRWAEALREMSGRLEEMPGDEGYPAYLGSRAADFYERAGKVLSLGSEGREGALTVIGAVSPPGGDLSEPVTQATLRIVKVFWGLDSQLAYRRHFPAINWLNSYSLYLEKISPWMDENVASDWTALRTRAMSLLQEEANLEEIVRLVGIDALSEKDRLKLEVAKSLREDYLQQNAFHEVDTYASLEKQYKMLKLVLFFYDETQRALNAGIYLKELLDLEVRDKIARAKYISEESIENIDAIFNELSEVIDQLISKGGIMNA</sequence>
<accession>B1KXT6</accession>
<dbReference type="EC" id="7.1.2.2" evidence="1"/>
<dbReference type="EMBL" id="CP000962">
    <property type="protein sequence ID" value="ACA56015.1"/>
    <property type="molecule type" value="Genomic_DNA"/>
</dbReference>
<dbReference type="SMR" id="B1KXT6"/>
<dbReference type="KEGG" id="cbl:CLK_2011"/>
<dbReference type="HOGENOM" id="CLU_008162_3_1_9"/>
<dbReference type="GO" id="GO:0045259">
    <property type="term" value="C:proton-transporting ATP synthase complex"/>
    <property type="evidence" value="ECO:0007669"/>
    <property type="project" value="UniProtKB-ARBA"/>
</dbReference>
<dbReference type="GO" id="GO:0005524">
    <property type="term" value="F:ATP binding"/>
    <property type="evidence" value="ECO:0007669"/>
    <property type="project" value="UniProtKB-UniRule"/>
</dbReference>
<dbReference type="GO" id="GO:0046933">
    <property type="term" value="F:proton-transporting ATP synthase activity, rotational mechanism"/>
    <property type="evidence" value="ECO:0007669"/>
    <property type="project" value="UniProtKB-UniRule"/>
</dbReference>
<dbReference type="GO" id="GO:0046961">
    <property type="term" value="F:proton-transporting ATPase activity, rotational mechanism"/>
    <property type="evidence" value="ECO:0007669"/>
    <property type="project" value="InterPro"/>
</dbReference>
<dbReference type="GO" id="GO:0042777">
    <property type="term" value="P:proton motive force-driven plasma membrane ATP synthesis"/>
    <property type="evidence" value="ECO:0007669"/>
    <property type="project" value="UniProtKB-UniRule"/>
</dbReference>
<dbReference type="CDD" id="cd18111">
    <property type="entry name" value="ATP-synt_V_A-type_alpha_C"/>
    <property type="match status" value="1"/>
</dbReference>
<dbReference type="CDD" id="cd18119">
    <property type="entry name" value="ATP-synt_V_A-type_alpha_N"/>
    <property type="match status" value="1"/>
</dbReference>
<dbReference type="CDD" id="cd01134">
    <property type="entry name" value="V_A-ATPase_A"/>
    <property type="match status" value="1"/>
</dbReference>
<dbReference type="FunFam" id="3.40.50.300:FF:000675">
    <property type="entry name" value="V-type ATP synthase alpha chain"/>
    <property type="match status" value="1"/>
</dbReference>
<dbReference type="FunFam" id="1.10.1140.10:FF:000002">
    <property type="entry name" value="V-type proton ATPase catalytic subunit A"/>
    <property type="match status" value="1"/>
</dbReference>
<dbReference type="FunFam" id="2.40.30.20:FF:000002">
    <property type="entry name" value="V-type proton ATPase catalytic subunit A"/>
    <property type="match status" value="1"/>
</dbReference>
<dbReference type="FunFam" id="2.40.50.100:FF:000008">
    <property type="entry name" value="V-type proton ATPase catalytic subunit A"/>
    <property type="match status" value="1"/>
</dbReference>
<dbReference type="Gene3D" id="2.40.30.20">
    <property type="match status" value="1"/>
</dbReference>
<dbReference type="Gene3D" id="2.40.50.100">
    <property type="match status" value="1"/>
</dbReference>
<dbReference type="Gene3D" id="1.10.1140.10">
    <property type="entry name" value="Bovine Mitochondrial F1-atpase, Atp Synthase Beta Chain, Chain D, domain 3"/>
    <property type="match status" value="1"/>
</dbReference>
<dbReference type="Gene3D" id="3.40.50.300">
    <property type="entry name" value="P-loop containing nucleotide triphosphate hydrolases"/>
    <property type="match status" value="1"/>
</dbReference>
<dbReference type="HAMAP" id="MF_00309">
    <property type="entry name" value="ATP_synth_A_arch"/>
    <property type="match status" value="1"/>
</dbReference>
<dbReference type="InterPro" id="IPR055190">
    <property type="entry name" value="ATP-synt_VA_C"/>
</dbReference>
<dbReference type="InterPro" id="IPR031686">
    <property type="entry name" value="ATP-synth_a_Xtn"/>
</dbReference>
<dbReference type="InterPro" id="IPR023366">
    <property type="entry name" value="ATP_synth_asu-like_sf"/>
</dbReference>
<dbReference type="InterPro" id="IPR020003">
    <property type="entry name" value="ATPase_a/bsu_AS"/>
</dbReference>
<dbReference type="InterPro" id="IPR004100">
    <property type="entry name" value="ATPase_F1/V1/A1_a/bsu_N"/>
</dbReference>
<dbReference type="InterPro" id="IPR036121">
    <property type="entry name" value="ATPase_F1/V1/A1_a/bsu_N_sf"/>
</dbReference>
<dbReference type="InterPro" id="IPR000194">
    <property type="entry name" value="ATPase_F1/V1/A1_a/bsu_nucl-bd"/>
</dbReference>
<dbReference type="InterPro" id="IPR024034">
    <property type="entry name" value="ATPase_F1/V1_b/a_C"/>
</dbReference>
<dbReference type="InterPro" id="IPR027417">
    <property type="entry name" value="P-loop_NTPase"/>
</dbReference>
<dbReference type="InterPro" id="IPR022878">
    <property type="entry name" value="V-ATPase_asu"/>
</dbReference>
<dbReference type="NCBIfam" id="NF003220">
    <property type="entry name" value="PRK04192.1"/>
    <property type="match status" value="1"/>
</dbReference>
<dbReference type="PANTHER" id="PTHR43607:SF1">
    <property type="entry name" value="H(+)-TRANSPORTING TWO-SECTOR ATPASE"/>
    <property type="match status" value="1"/>
</dbReference>
<dbReference type="PANTHER" id="PTHR43607">
    <property type="entry name" value="V-TYPE PROTON ATPASE CATALYTIC SUBUNIT A"/>
    <property type="match status" value="1"/>
</dbReference>
<dbReference type="Pfam" id="PF00006">
    <property type="entry name" value="ATP-synt_ab"/>
    <property type="match status" value="1"/>
</dbReference>
<dbReference type="Pfam" id="PF02874">
    <property type="entry name" value="ATP-synt_ab_N"/>
    <property type="match status" value="1"/>
</dbReference>
<dbReference type="Pfam" id="PF16886">
    <property type="entry name" value="ATP-synt_ab_Xtn"/>
    <property type="match status" value="1"/>
</dbReference>
<dbReference type="Pfam" id="PF22919">
    <property type="entry name" value="ATP-synt_VA_C"/>
    <property type="match status" value="1"/>
</dbReference>
<dbReference type="SUPFAM" id="SSF47917">
    <property type="entry name" value="C-terminal domain of alpha and beta subunits of F1 ATP synthase"/>
    <property type="match status" value="1"/>
</dbReference>
<dbReference type="SUPFAM" id="SSF50615">
    <property type="entry name" value="N-terminal domain of alpha and beta subunits of F1 ATP synthase"/>
    <property type="match status" value="1"/>
</dbReference>
<dbReference type="SUPFAM" id="SSF52540">
    <property type="entry name" value="P-loop containing nucleoside triphosphate hydrolases"/>
    <property type="match status" value="1"/>
</dbReference>
<dbReference type="PROSITE" id="PS00152">
    <property type="entry name" value="ATPASE_ALPHA_BETA"/>
    <property type="match status" value="1"/>
</dbReference>
<reference key="1">
    <citation type="journal article" date="2007" name="PLoS ONE">
        <title>Analysis of the neurotoxin complex genes in Clostridium botulinum A1-A4 and B1 strains: BoNT/A3, /Ba4 and /B1 clusters are located within plasmids.</title>
        <authorList>
            <person name="Smith T.J."/>
            <person name="Hill K.K."/>
            <person name="Foley B.T."/>
            <person name="Detter J.C."/>
            <person name="Munk A.C."/>
            <person name="Bruce D.C."/>
            <person name="Doggett N.A."/>
            <person name="Smith L.A."/>
            <person name="Marks J.D."/>
            <person name="Xie G."/>
            <person name="Brettin T.S."/>
        </authorList>
    </citation>
    <scope>NUCLEOTIDE SEQUENCE [LARGE SCALE GENOMIC DNA]</scope>
    <source>
        <strain>Loch Maree / Type A3</strain>
    </source>
</reference>
<keyword id="KW-0066">ATP synthesis</keyword>
<keyword id="KW-0067">ATP-binding</keyword>
<keyword id="KW-0375">Hydrogen ion transport</keyword>
<keyword id="KW-0406">Ion transport</keyword>
<keyword id="KW-0547">Nucleotide-binding</keyword>
<keyword id="KW-1278">Translocase</keyword>
<keyword id="KW-0813">Transport</keyword>
<feature type="chain" id="PRO_1000115639" description="V-type ATP synthase alpha chain">
    <location>
        <begin position="1"/>
        <end position="592"/>
    </location>
</feature>
<feature type="binding site" evidence="1">
    <location>
        <begin position="233"/>
        <end position="240"/>
    </location>
    <ligand>
        <name>ATP</name>
        <dbReference type="ChEBI" id="CHEBI:30616"/>
    </ligand>
</feature>